<reference key="1">
    <citation type="journal article" date="1997" name="Biochim. Biophys. Acta">
        <title>Molecular cloning of cDNAs for mouse low-molecular-weight and high-molecular-weight prekininogens.</title>
        <authorList>
            <person name="Takano M."/>
            <person name="Kondo J."/>
            <person name="Yayama K."/>
            <person name="Otani M."/>
            <person name="Sano K."/>
            <person name="Okamoto H."/>
        </authorList>
    </citation>
    <scope>NUCLEOTIDE SEQUENCE [MRNA] (ISOFORMS HMW AND LMW)</scope>
    <source>
        <strain>C57BL/6 X CBA</strain>
        <tissue>Liver</tissue>
    </source>
</reference>
<reference key="2">
    <citation type="journal article" date="2004" name="Biol. Chem.">
        <title>Structure and expression of two kininogen genes in mice.</title>
        <authorList>
            <person name="Cardoso C.C."/>
            <person name="Garrett T."/>
            <person name="Cayla C."/>
            <person name="Meneton P."/>
            <person name="Pesquero J.B."/>
            <person name="Bader M."/>
        </authorList>
    </citation>
    <scope>NUCLEOTIDE SEQUENCE [MRNA] (ISOFORM 3)</scope>
    <source>
        <strain>FVB/N</strain>
    </source>
</reference>
<reference key="3">
    <citation type="submission" date="2004-06" db="EMBL/GenBank/DDBJ databases">
        <title>Characterization of high molecular weight kininogen gene duplication in mice.</title>
        <authorList>
            <person name="Merkulov S.M."/>
            <person name="Komar A.A."/>
            <person name="McCrae K.R."/>
        </authorList>
    </citation>
    <scope>NUCLEOTIDE SEQUENCE [MRNA] (ISOFORM 3)</scope>
    <source>
        <strain>C57BL/6J</strain>
    </source>
</reference>
<reference key="4">
    <citation type="journal article" date="2005" name="Science">
        <title>The transcriptional landscape of the mammalian genome.</title>
        <authorList>
            <person name="Carninci P."/>
            <person name="Kasukawa T."/>
            <person name="Katayama S."/>
            <person name="Gough J."/>
            <person name="Frith M.C."/>
            <person name="Maeda N."/>
            <person name="Oyama R."/>
            <person name="Ravasi T."/>
            <person name="Lenhard B."/>
            <person name="Wells C."/>
            <person name="Kodzius R."/>
            <person name="Shimokawa K."/>
            <person name="Bajic V.B."/>
            <person name="Brenner S.E."/>
            <person name="Batalov S."/>
            <person name="Forrest A.R."/>
            <person name="Zavolan M."/>
            <person name="Davis M.J."/>
            <person name="Wilming L.G."/>
            <person name="Aidinis V."/>
            <person name="Allen J.E."/>
            <person name="Ambesi-Impiombato A."/>
            <person name="Apweiler R."/>
            <person name="Aturaliya R.N."/>
            <person name="Bailey T.L."/>
            <person name="Bansal M."/>
            <person name="Baxter L."/>
            <person name="Beisel K.W."/>
            <person name="Bersano T."/>
            <person name="Bono H."/>
            <person name="Chalk A.M."/>
            <person name="Chiu K.P."/>
            <person name="Choudhary V."/>
            <person name="Christoffels A."/>
            <person name="Clutterbuck D.R."/>
            <person name="Crowe M.L."/>
            <person name="Dalla E."/>
            <person name="Dalrymple B.P."/>
            <person name="de Bono B."/>
            <person name="Della Gatta G."/>
            <person name="di Bernardo D."/>
            <person name="Down T."/>
            <person name="Engstrom P."/>
            <person name="Fagiolini M."/>
            <person name="Faulkner G."/>
            <person name="Fletcher C.F."/>
            <person name="Fukushima T."/>
            <person name="Furuno M."/>
            <person name="Futaki S."/>
            <person name="Gariboldi M."/>
            <person name="Georgii-Hemming P."/>
            <person name="Gingeras T.R."/>
            <person name="Gojobori T."/>
            <person name="Green R.E."/>
            <person name="Gustincich S."/>
            <person name="Harbers M."/>
            <person name="Hayashi Y."/>
            <person name="Hensch T.K."/>
            <person name="Hirokawa N."/>
            <person name="Hill D."/>
            <person name="Huminiecki L."/>
            <person name="Iacono M."/>
            <person name="Ikeo K."/>
            <person name="Iwama A."/>
            <person name="Ishikawa T."/>
            <person name="Jakt M."/>
            <person name="Kanapin A."/>
            <person name="Katoh M."/>
            <person name="Kawasawa Y."/>
            <person name="Kelso J."/>
            <person name="Kitamura H."/>
            <person name="Kitano H."/>
            <person name="Kollias G."/>
            <person name="Krishnan S.P."/>
            <person name="Kruger A."/>
            <person name="Kummerfeld S.K."/>
            <person name="Kurochkin I.V."/>
            <person name="Lareau L.F."/>
            <person name="Lazarevic D."/>
            <person name="Lipovich L."/>
            <person name="Liu J."/>
            <person name="Liuni S."/>
            <person name="McWilliam S."/>
            <person name="Madan Babu M."/>
            <person name="Madera M."/>
            <person name="Marchionni L."/>
            <person name="Matsuda H."/>
            <person name="Matsuzawa S."/>
            <person name="Miki H."/>
            <person name="Mignone F."/>
            <person name="Miyake S."/>
            <person name="Morris K."/>
            <person name="Mottagui-Tabar S."/>
            <person name="Mulder N."/>
            <person name="Nakano N."/>
            <person name="Nakauchi H."/>
            <person name="Ng P."/>
            <person name="Nilsson R."/>
            <person name="Nishiguchi S."/>
            <person name="Nishikawa S."/>
            <person name="Nori F."/>
            <person name="Ohara O."/>
            <person name="Okazaki Y."/>
            <person name="Orlando V."/>
            <person name="Pang K.C."/>
            <person name="Pavan W.J."/>
            <person name="Pavesi G."/>
            <person name="Pesole G."/>
            <person name="Petrovsky N."/>
            <person name="Piazza S."/>
            <person name="Reed J."/>
            <person name="Reid J.F."/>
            <person name="Ring B.Z."/>
            <person name="Ringwald M."/>
            <person name="Rost B."/>
            <person name="Ruan Y."/>
            <person name="Salzberg S.L."/>
            <person name="Sandelin A."/>
            <person name="Schneider C."/>
            <person name="Schoenbach C."/>
            <person name="Sekiguchi K."/>
            <person name="Semple C.A."/>
            <person name="Seno S."/>
            <person name="Sessa L."/>
            <person name="Sheng Y."/>
            <person name="Shibata Y."/>
            <person name="Shimada H."/>
            <person name="Shimada K."/>
            <person name="Silva D."/>
            <person name="Sinclair B."/>
            <person name="Sperling S."/>
            <person name="Stupka E."/>
            <person name="Sugiura K."/>
            <person name="Sultana R."/>
            <person name="Takenaka Y."/>
            <person name="Taki K."/>
            <person name="Tammoja K."/>
            <person name="Tan S.L."/>
            <person name="Tang S."/>
            <person name="Taylor M.S."/>
            <person name="Tegner J."/>
            <person name="Teichmann S.A."/>
            <person name="Ueda H.R."/>
            <person name="van Nimwegen E."/>
            <person name="Verardo R."/>
            <person name="Wei C.L."/>
            <person name="Yagi K."/>
            <person name="Yamanishi H."/>
            <person name="Zabarovsky E."/>
            <person name="Zhu S."/>
            <person name="Zimmer A."/>
            <person name="Hide W."/>
            <person name="Bult C."/>
            <person name="Grimmond S.M."/>
            <person name="Teasdale R.D."/>
            <person name="Liu E.T."/>
            <person name="Brusic V."/>
            <person name="Quackenbush J."/>
            <person name="Wahlestedt C."/>
            <person name="Mattick J.S."/>
            <person name="Hume D.A."/>
            <person name="Kai C."/>
            <person name="Sasaki D."/>
            <person name="Tomaru Y."/>
            <person name="Fukuda S."/>
            <person name="Kanamori-Katayama M."/>
            <person name="Suzuki M."/>
            <person name="Aoki J."/>
            <person name="Arakawa T."/>
            <person name="Iida J."/>
            <person name="Imamura K."/>
            <person name="Itoh M."/>
            <person name="Kato T."/>
            <person name="Kawaji H."/>
            <person name="Kawagashira N."/>
            <person name="Kawashima T."/>
            <person name="Kojima M."/>
            <person name="Kondo S."/>
            <person name="Konno H."/>
            <person name="Nakano K."/>
            <person name="Ninomiya N."/>
            <person name="Nishio T."/>
            <person name="Okada M."/>
            <person name="Plessy C."/>
            <person name="Shibata K."/>
            <person name="Shiraki T."/>
            <person name="Suzuki S."/>
            <person name="Tagami M."/>
            <person name="Waki K."/>
            <person name="Watahiki A."/>
            <person name="Okamura-Oho Y."/>
            <person name="Suzuki H."/>
            <person name="Kawai J."/>
            <person name="Hayashizaki Y."/>
        </authorList>
    </citation>
    <scope>NUCLEOTIDE SEQUENCE [LARGE SCALE MRNA] (ISOFORM LMW)</scope>
    <source>
        <strain>C57BL/6J</strain>
        <tissue>Placenta</tissue>
    </source>
</reference>
<reference key="5">
    <citation type="journal article" date="2004" name="Genome Res.">
        <title>The status, quality, and expansion of the NIH full-length cDNA project: the Mammalian Gene Collection (MGC).</title>
        <authorList>
            <consortium name="The MGC Project Team"/>
        </authorList>
    </citation>
    <scope>NUCLEOTIDE SEQUENCE [LARGE SCALE MRNA] (ISOFORMS HMW AND LMW)</scope>
    <source>
        <strain>FVB/N</strain>
        <tissue>Liver</tissue>
    </source>
</reference>
<reference key="6">
    <citation type="journal article" date="2010" name="Biochim. Biophys. Acta">
        <title>Human CRISP-3 binds serum alpha1B-glycoprotein across species.</title>
        <authorList>
            <person name="Udby L."/>
            <person name="Johnsen A.H."/>
            <person name="Borregaard N."/>
        </authorList>
    </citation>
    <scope>PROTEIN SEQUENCE OF 21-35 AND 389-403 (ISOFORM LMW)</scope>
    <scope>INTERACTION WITH CRISP3</scope>
    <source>
        <tissue>Serum</tissue>
    </source>
</reference>
<reference key="7">
    <citation type="journal article" date="2006" name="J. Proteome Res.">
        <title>Proteome-wide characterization of N-glycosylation events by diagonal chromatography.</title>
        <authorList>
            <person name="Ghesquiere B."/>
            <person name="Van Damme J."/>
            <person name="Martens L."/>
            <person name="Vandekerckhove J."/>
            <person name="Gevaert K."/>
        </authorList>
    </citation>
    <scope>GLYCOSYLATION [LARGE SCALE ANALYSIS] AT ASN-168</scope>
    <source>
        <strain>C57BL/6J</strain>
        <tissue>Plasma</tissue>
    </source>
</reference>
<reference key="8">
    <citation type="journal article" date="2007" name="J. Proteome Res.">
        <title>Enhanced analysis of the mouse plasma proteome using cysteine-containing tryptic glycopeptides.</title>
        <authorList>
            <person name="Bernhard O.K."/>
            <person name="Kapp E.A."/>
            <person name="Simpson R.J."/>
        </authorList>
    </citation>
    <scope>GLYCOSYLATION [LARGE SCALE ANALYSIS] AT ASN-82; ASN-168; ASN-204 AND ASN-242</scope>
    <source>
        <strain>C57BL/6J</strain>
        <tissue>Plasma</tissue>
    </source>
</reference>
<reference key="9">
    <citation type="journal article" date="2010" name="Cell">
        <title>A tissue-specific atlas of mouse protein phosphorylation and expression.</title>
        <authorList>
            <person name="Huttlin E.L."/>
            <person name="Jedrychowski M.P."/>
            <person name="Elias J.E."/>
            <person name="Goswami T."/>
            <person name="Rad R."/>
            <person name="Beausoleil S.A."/>
            <person name="Villen J."/>
            <person name="Haas W."/>
            <person name="Sowa M.E."/>
            <person name="Gygi S.P."/>
        </authorList>
    </citation>
    <scope>IDENTIFICATION BY MASS SPECTROMETRY [LARGE SCALE ANALYSIS]</scope>
    <source>
        <tissue>Brain</tissue>
        <tissue>Brown adipose tissue</tissue>
        <tissue>Heart</tissue>
        <tissue>Kidney</tissue>
        <tissue>Liver</tissue>
        <tissue>Lung</tissue>
        <tissue>Pancreas</tissue>
        <tissue>Spleen</tissue>
        <tissue>Testis</tissue>
    </source>
</reference>
<comment type="function">
    <text>Kininogens are inhibitors of thiol proteases. HMW-kininogen plays an important role in blood coagulation by helping to position optimally prekallikrein and factor XI next to factor XII; HMW-kininogen inhibits the thrombin- and plasmin-induced aggregation of thrombocytes. LMW-kininogen inhibits the aggregation of thrombocytes. LMW-kininogen is in contrast to HMW-kininogen not involved in blood clotting.</text>
</comment>
<comment type="function">
    <molecule>Bradykinin</molecule>
    <text evidence="1">The active peptide bradykinin is a potent vasodilatator that is released from HMW-kininogen shows a variety of physiological effects: (A) influence in smooth muscle contraction, (B) induction of hypotension, (C) natriuresis and diuresis, (D) decrease in blood glucose level, (E) it is a mediator of inflammation and causes (E1) increase in vascular permeability, (E2) stimulation of nociceptors (4E3) release of other mediators of inflammation (e.g. prostaglandins), (F) it has a cardioprotective effect (directly via bradykinin action, indirectly via endothelium-derived relaxing factor action).</text>
</comment>
<comment type="subunit">
    <text evidence="6">Isoform LMW interacts with CRISP3.</text>
</comment>
<comment type="subcellular location">
    <subcellularLocation>
        <location>Secreted</location>
        <location>Extracellular space</location>
    </subcellularLocation>
</comment>
<comment type="alternative products">
    <event type="alternative splicing"/>
    <isoform>
        <id>O08677-1</id>
        <name>HMW</name>
        <sequence type="displayed"/>
    </isoform>
    <isoform>
        <id>O08677-2</id>
        <name>LMW</name>
        <sequence type="described" ref="VSP_001263 VSP_001264"/>
    </isoform>
    <isoform>
        <id>O08677-3</id>
        <name>3</name>
        <sequence type="described" ref="VSP_037159"/>
    </isoform>
</comment>
<comment type="tissue specificity">
    <text>Plasma.</text>
</comment>
<comment type="PTM">
    <text>Bradykinin is released from kininogen by plasma kallikrein.</text>
</comment>
<comment type="PTM">
    <text evidence="1">Phosphorylated by FAM20C in the extracellular medium.</text>
</comment>
<comment type="PTM">
    <molecule>Bradykinin</molecule>
    <text evidence="1">Bradykinin is inactivated by ACE, which removes the dipeptide Arg-Phe from its C-terminus.</text>
</comment>
<protein>
    <recommendedName>
        <fullName>Kininogen-1</fullName>
    </recommendedName>
    <component>
        <recommendedName>
            <fullName>Kininogen-1 heavy chain</fullName>
        </recommendedName>
    </component>
    <component>
        <recommendedName>
            <fullName>Bradykinin</fullName>
        </recommendedName>
    </component>
    <component>
        <recommendedName>
            <fullName>Kininogen-1 light chain</fullName>
        </recommendedName>
    </component>
</protein>
<proteinExistence type="evidence at protein level"/>
<sequence length="661" mass="73102">MKLITTLLLCSGLLLTLTQGEEAQEIDCNDEAVFQAVDFSLKQFNPGVKSGNQYMLHRVIEGTKTDGSPTFYSFKYLIKEGNCSAQSGLAWQDCDFKDAEEAATGECTATVGKRENEFFIVTQTCKIAPSKAPILKAYFPCIGCVHAISTDSPDLEPVLKHSIEHFNNNTDHSHLFTLRKVKSAHRQVVAGLNFDITYTIVQTNCSKERFPSLHGDCVALPNGDDGECRGNLFMDINNKIANFSQSCTLYSGDDLVEALPKPCPGCPRDIPVDSPELKEVLGHSIAQLNAENDHPFYYKIDTVKKATSQVVAGTKYVIEFIARETKCSKESNTELAEDCEIKHLGQSLDCNANVYMRPWENKVVPTVKCQALDMTEMARRPPGFSPFRSVTVQETKEGRTVSPPYIAREQEERDAETEQGPTHGHGWLHEKQIKANKNHRGHKHGHDHGHWSPRRHGLGHGHQKPHGLGHGHQLKLDYLRHQREDGDDHTHTVGHGHGHGHGHGHGHGHGHGHGHGHGHGHGHGKHTNKDKNSVKQTTQRTESLASSSEYSTTSTQMQGRTEGPTLTPPRAQPTVTSSGFQDSDFIEDVVATTPPYDTGAHDDLIPDIHVQPDSLSFKLISDFPEATSPKCPGRPWKPASWEDPNTETTEFSDFDLLDALS</sequence>
<name>KNG1_MOUSE</name>
<feature type="signal peptide">
    <location>
        <begin position="1"/>
        <end position="20"/>
    </location>
</feature>
<feature type="chain" id="PRO_0000006691" description="Kininogen-1">
    <location>
        <begin position="21"/>
        <end position="661"/>
    </location>
</feature>
<feature type="chain" id="PRO_0000006692" description="Kininogen-1 heavy chain">
    <location>
        <begin position="21"/>
        <end position="379"/>
    </location>
</feature>
<feature type="peptide" id="PRO_0000006693" description="Bradykinin">
    <location>
        <begin position="380"/>
        <end position="388"/>
    </location>
</feature>
<feature type="chain" id="PRO_0000006694" description="Kininogen-1 light chain">
    <location>
        <begin position="389"/>
        <end position="661"/>
    </location>
</feature>
<feature type="domain" description="Cystatin kininogen-type 1" evidence="2">
    <location>
        <begin position="28"/>
        <end position="131"/>
    </location>
</feature>
<feature type="domain" description="Cystatin kininogen-type 2" evidence="2">
    <location>
        <begin position="150"/>
        <end position="253"/>
    </location>
</feature>
<feature type="domain" description="Cystatin kininogen-type 3" evidence="2">
    <location>
        <begin position="272"/>
        <end position="375"/>
    </location>
</feature>
<feature type="region of interest" description="Disordered" evidence="3">
    <location>
        <begin position="405"/>
        <end position="471"/>
    </location>
</feature>
<feature type="region of interest" description="Disordered" evidence="3">
    <location>
        <begin position="485"/>
        <end position="583"/>
    </location>
</feature>
<feature type="region of interest" description="Disordered" evidence="3">
    <location>
        <begin position="626"/>
        <end position="661"/>
    </location>
</feature>
<feature type="compositionally biased region" description="Basic residues" evidence="3">
    <location>
        <begin position="434"/>
        <end position="471"/>
    </location>
</feature>
<feature type="compositionally biased region" description="Basic residues" evidence="3">
    <location>
        <begin position="492"/>
        <end position="526"/>
    </location>
</feature>
<feature type="compositionally biased region" description="Low complexity" evidence="3">
    <location>
        <begin position="541"/>
        <end position="555"/>
    </location>
</feature>
<feature type="compositionally biased region" description="Acidic residues" evidence="3">
    <location>
        <begin position="650"/>
        <end position="661"/>
    </location>
</feature>
<feature type="site" description="Cleavage; by ACE" evidence="1">
    <location>
        <begin position="386"/>
        <end position="387"/>
    </location>
</feature>
<feature type="modified residue" description="Phosphoserine" evidence="1">
    <location>
        <position position="331"/>
    </location>
</feature>
<feature type="glycosylation site" description="N-linked (GlcNAc...) asparagine" evidence="5">
    <location>
        <position position="82"/>
    </location>
</feature>
<feature type="glycosylation site" description="N-linked (GlcNAc...) asparagine" evidence="4 5">
    <location>
        <position position="168"/>
    </location>
</feature>
<feature type="glycosylation site" description="N-linked (GlcNAc...) asparagine" evidence="5">
    <location>
        <position position="204"/>
    </location>
</feature>
<feature type="glycosylation site" description="N-linked (GlcNAc...) asparagine" evidence="5">
    <location>
        <position position="242"/>
    </location>
</feature>
<feature type="disulfide bond" description="Interchain (between heavy and light chains)" evidence="2">
    <location>
        <begin position="28"/>
        <end position="631"/>
    </location>
</feature>
<feature type="disulfide bond" evidence="2">
    <location>
        <begin position="83"/>
        <end position="94"/>
    </location>
</feature>
<feature type="disulfide bond" evidence="2">
    <location>
        <begin position="107"/>
        <end position="125"/>
    </location>
</feature>
<feature type="disulfide bond" evidence="2">
    <location>
        <begin position="141"/>
        <end position="144"/>
    </location>
</feature>
<feature type="disulfide bond" evidence="2">
    <location>
        <begin position="205"/>
        <end position="217"/>
    </location>
</feature>
<feature type="disulfide bond" evidence="2">
    <location>
        <begin position="228"/>
        <end position="247"/>
    </location>
</feature>
<feature type="disulfide bond" evidence="2">
    <location>
        <begin position="263"/>
        <end position="266"/>
    </location>
</feature>
<feature type="disulfide bond" evidence="2">
    <location>
        <begin position="327"/>
        <end position="339"/>
    </location>
</feature>
<feature type="disulfide bond" evidence="2">
    <location>
        <begin position="350"/>
        <end position="369"/>
    </location>
</feature>
<feature type="splice variant" id="VSP_037159" description="In isoform 3." evidence="7 11">
    <location>
        <begin position="401"/>
        <end position="581"/>
    </location>
</feature>
<feature type="splice variant" id="VSP_001263" description="In isoform LMW." evidence="8 9 10">
    <original>VSPPYIAREQEERDAETEQGPTHGHGWLHEKQ</original>
    <variation>RLLRACEYKGRLSKAGAEPAPERQAESSQVKQ</variation>
    <location>
        <begin position="401"/>
        <end position="432"/>
    </location>
</feature>
<feature type="splice variant" id="VSP_001264" description="In isoform LMW." evidence="8 9 10">
    <location>
        <begin position="433"/>
        <end position="661"/>
    </location>
</feature>
<feature type="sequence conflict" description="In Ref. 5; AAI08937." evidence="12" ref="5">
    <original>E</original>
    <variation>K</variation>
    <location>
        <position position="642"/>
    </location>
</feature>
<evidence type="ECO:0000250" key="1">
    <source>
        <dbReference type="UniProtKB" id="P01042"/>
    </source>
</evidence>
<evidence type="ECO:0000255" key="2">
    <source>
        <dbReference type="PROSITE-ProRule" id="PRU00979"/>
    </source>
</evidence>
<evidence type="ECO:0000256" key="3">
    <source>
        <dbReference type="SAM" id="MobiDB-lite"/>
    </source>
</evidence>
<evidence type="ECO:0000269" key="4">
    <source>
    </source>
</evidence>
<evidence type="ECO:0000269" key="5">
    <source>
    </source>
</evidence>
<evidence type="ECO:0000269" key="6">
    <source>
    </source>
</evidence>
<evidence type="ECO:0000303" key="7">
    <source>
    </source>
</evidence>
<evidence type="ECO:0000303" key="8">
    <source>
    </source>
</evidence>
<evidence type="ECO:0000303" key="9">
    <source>
    </source>
</evidence>
<evidence type="ECO:0000303" key="10">
    <source>
    </source>
</evidence>
<evidence type="ECO:0000303" key="11">
    <source ref="3"/>
</evidence>
<evidence type="ECO:0000305" key="12"/>
<dbReference type="EMBL" id="D84415">
    <property type="protein sequence ID" value="BAA19742.1"/>
    <property type="molecule type" value="mRNA"/>
</dbReference>
<dbReference type="EMBL" id="D84435">
    <property type="protein sequence ID" value="BAA19743.1"/>
    <property type="molecule type" value="mRNA"/>
</dbReference>
<dbReference type="EMBL" id="AY462058">
    <property type="protein sequence ID" value="AAR88632.1"/>
    <property type="molecule type" value="mRNA"/>
</dbReference>
<dbReference type="EMBL" id="AY660571">
    <property type="protein sequence ID" value="AAT70087.1"/>
    <property type="molecule type" value="mRNA"/>
</dbReference>
<dbReference type="EMBL" id="AK005547">
    <property type="status" value="NOT_ANNOTATED_CDS"/>
    <property type="molecule type" value="mRNA"/>
</dbReference>
<dbReference type="EMBL" id="BC018158">
    <property type="protein sequence ID" value="AAH18158.1"/>
    <property type="molecule type" value="mRNA"/>
</dbReference>
<dbReference type="EMBL" id="BC108936">
    <property type="protein sequence ID" value="AAI08937.1"/>
    <property type="molecule type" value="mRNA"/>
</dbReference>
<dbReference type="CCDS" id="CCDS28073.1">
    <molecule id="O08677-2"/>
</dbReference>
<dbReference type="CCDS" id="CCDS49803.1">
    <molecule id="O08677-3"/>
</dbReference>
<dbReference type="CCDS" id="CCDS49804.1">
    <molecule id="O08677-1"/>
</dbReference>
<dbReference type="RefSeq" id="NP_001095881.1">
    <property type="nucleotide sequence ID" value="NM_001102411.1"/>
</dbReference>
<dbReference type="RefSeq" id="NP_075614.1">
    <molecule id="O08677-2"/>
    <property type="nucleotide sequence ID" value="NM_023125.3"/>
</dbReference>
<dbReference type="SMR" id="O08677"/>
<dbReference type="BioGRID" id="201005">
    <property type="interactions" value="7"/>
</dbReference>
<dbReference type="FunCoup" id="O08677">
    <property type="interactions" value="792"/>
</dbReference>
<dbReference type="IntAct" id="O08677">
    <property type="interactions" value="4"/>
</dbReference>
<dbReference type="STRING" id="10090.ENSMUSP00000023589"/>
<dbReference type="MEROPS" id="I25.018"/>
<dbReference type="MEROPS" id="I25.019"/>
<dbReference type="MEROPS" id="I25.950"/>
<dbReference type="GlyConnect" id="2451">
    <property type="glycosylation" value="1 N-Linked glycan (1 site)"/>
</dbReference>
<dbReference type="GlyCosmos" id="O08677">
    <property type="glycosylation" value="4 sites, 1 glycan"/>
</dbReference>
<dbReference type="GlyGen" id="O08677">
    <property type="glycosylation" value="5 sites, 4 N-linked glycans (3 sites), 1 O-linked glycan (1 site)"/>
</dbReference>
<dbReference type="iPTMnet" id="O08677"/>
<dbReference type="PhosphoSitePlus" id="O08677"/>
<dbReference type="SwissPalm" id="O08677"/>
<dbReference type="REPRODUCTION-2DPAGE" id="IPI00129225"/>
<dbReference type="CPTAC" id="non-CPTAC-3506"/>
<dbReference type="jPOST" id="O08677"/>
<dbReference type="PaxDb" id="10090-ENSMUSP00000023589"/>
<dbReference type="PeptideAtlas" id="O08677"/>
<dbReference type="ProteomicsDB" id="263640">
    <molecule id="O08677-1"/>
</dbReference>
<dbReference type="ProteomicsDB" id="263641">
    <molecule id="O08677-2"/>
</dbReference>
<dbReference type="ProteomicsDB" id="263642">
    <molecule id="O08677-3"/>
</dbReference>
<dbReference type="DNASU" id="16644"/>
<dbReference type="Ensembl" id="ENSMUST00000039492.14">
    <molecule id="O08677-2"/>
    <property type="protein sequence ID" value="ENSMUSP00000040485.7"/>
    <property type="gene ID" value="ENSMUSG00000022875.19"/>
</dbReference>
<dbReference type="GeneID" id="16644"/>
<dbReference type="KEGG" id="mmu:16644"/>
<dbReference type="UCSC" id="uc007ytb.1">
    <molecule id="O08677-1"/>
    <property type="organism name" value="mouse"/>
</dbReference>
<dbReference type="UCSC" id="uc007ytc.1">
    <molecule id="O08677-2"/>
    <property type="organism name" value="mouse"/>
</dbReference>
<dbReference type="AGR" id="MGI:1097705"/>
<dbReference type="CTD" id="3827"/>
<dbReference type="MGI" id="MGI:1097705">
    <property type="gene designation" value="Kng1"/>
</dbReference>
<dbReference type="VEuPathDB" id="HostDB:ENSMUSG00000022875"/>
<dbReference type="eggNOG" id="ENOG502RYAC">
    <property type="taxonomic scope" value="Eukaryota"/>
</dbReference>
<dbReference type="GeneTree" id="ENSGT00950000182930"/>
<dbReference type="InParanoid" id="O08677"/>
<dbReference type="OMA" id="ASIYERP"/>
<dbReference type="OrthoDB" id="9937817at2759"/>
<dbReference type="PhylomeDB" id="O08677"/>
<dbReference type="TreeFam" id="TF351852"/>
<dbReference type="BioGRID-ORCS" id="16644">
    <property type="hits" value="1 hit in 76 CRISPR screens"/>
</dbReference>
<dbReference type="PRO" id="PR:O08677"/>
<dbReference type="Proteomes" id="UP000000589">
    <property type="component" value="Chromosome 16"/>
</dbReference>
<dbReference type="RNAct" id="O08677">
    <property type="molecule type" value="protein"/>
</dbReference>
<dbReference type="Bgee" id="ENSMUSG00000022875">
    <property type="expression patterns" value="Expressed in left lobe of liver and 44 other cell types or tissues"/>
</dbReference>
<dbReference type="ExpressionAtlas" id="O08677">
    <property type="expression patterns" value="baseline and differential"/>
</dbReference>
<dbReference type="GO" id="GO:0062023">
    <property type="term" value="C:collagen-containing extracellular matrix"/>
    <property type="evidence" value="ECO:0007005"/>
    <property type="project" value="BHF-UCL"/>
</dbReference>
<dbReference type="GO" id="GO:0005576">
    <property type="term" value="C:extracellular region"/>
    <property type="evidence" value="ECO:0007669"/>
    <property type="project" value="UniProtKB-SubCell"/>
</dbReference>
<dbReference type="GO" id="GO:0004869">
    <property type="term" value="F:cysteine-type endopeptidase inhibitor activity"/>
    <property type="evidence" value="ECO:0007669"/>
    <property type="project" value="UniProtKB-KW"/>
</dbReference>
<dbReference type="GO" id="GO:0007596">
    <property type="term" value="P:blood coagulation"/>
    <property type="evidence" value="ECO:0007669"/>
    <property type="project" value="UniProtKB-KW"/>
</dbReference>
<dbReference type="GO" id="GO:0006954">
    <property type="term" value="P:inflammatory response"/>
    <property type="evidence" value="ECO:0007669"/>
    <property type="project" value="UniProtKB-KW"/>
</dbReference>
<dbReference type="GO" id="GO:0042311">
    <property type="term" value="P:vasodilation"/>
    <property type="evidence" value="ECO:0007669"/>
    <property type="project" value="UniProtKB-KW"/>
</dbReference>
<dbReference type="CDD" id="cd00042">
    <property type="entry name" value="CY"/>
    <property type="match status" value="3"/>
</dbReference>
<dbReference type="FunFam" id="3.10.450.10:FF:000002">
    <property type="entry name" value="Kininogen 1"/>
    <property type="match status" value="2"/>
</dbReference>
<dbReference type="FunFam" id="3.10.450.10:FF:000008">
    <property type="entry name" value="Kininogen 1"/>
    <property type="match status" value="1"/>
</dbReference>
<dbReference type="Gene3D" id="3.10.450.10">
    <property type="match status" value="3"/>
</dbReference>
<dbReference type="InterPro" id="IPR000010">
    <property type="entry name" value="Cystatin_dom"/>
</dbReference>
<dbReference type="InterPro" id="IPR046350">
    <property type="entry name" value="Cystatin_sf"/>
</dbReference>
<dbReference type="InterPro" id="IPR002395">
    <property type="entry name" value="Kininogen"/>
</dbReference>
<dbReference type="InterPro" id="IPR027358">
    <property type="entry name" value="Kininogen-type_cystatin_dom"/>
</dbReference>
<dbReference type="InterPro" id="IPR050735">
    <property type="entry name" value="Kininogen_Fetuin_HRG"/>
</dbReference>
<dbReference type="InterPro" id="IPR018073">
    <property type="entry name" value="Prot_inh_cystat_CS"/>
</dbReference>
<dbReference type="PANTHER" id="PTHR13814">
    <property type="entry name" value="FETUIN"/>
    <property type="match status" value="1"/>
</dbReference>
<dbReference type="PANTHER" id="PTHR13814:SF12">
    <property type="entry name" value="KININOGEN-1"/>
    <property type="match status" value="1"/>
</dbReference>
<dbReference type="Pfam" id="PF00031">
    <property type="entry name" value="Cystatin"/>
    <property type="match status" value="3"/>
</dbReference>
<dbReference type="PRINTS" id="PR00334">
    <property type="entry name" value="KININOGEN"/>
</dbReference>
<dbReference type="SMART" id="SM00043">
    <property type="entry name" value="CY"/>
    <property type="match status" value="3"/>
</dbReference>
<dbReference type="SUPFAM" id="SSF54403">
    <property type="entry name" value="Cystatin/monellin"/>
    <property type="match status" value="3"/>
</dbReference>
<dbReference type="PROSITE" id="PS00287">
    <property type="entry name" value="CYSTATIN"/>
    <property type="match status" value="1"/>
</dbReference>
<dbReference type="PROSITE" id="PS51647">
    <property type="entry name" value="CYSTATIN_KININOGEN"/>
    <property type="match status" value="3"/>
</dbReference>
<organism>
    <name type="scientific">Mus musculus</name>
    <name type="common">Mouse</name>
    <dbReference type="NCBI Taxonomy" id="10090"/>
    <lineage>
        <taxon>Eukaryota</taxon>
        <taxon>Metazoa</taxon>
        <taxon>Chordata</taxon>
        <taxon>Craniata</taxon>
        <taxon>Vertebrata</taxon>
        <taxon>Euteleostomi</taxon>
        <taxon>Mammalia</taxon>
        <taxon>Eutheria</taxon>
        <taxon>Euarchontoglires</taxon>
        <taxon>Glires</taxon>
        <taxon>Rodentia</taxon>
        <taxon>Myomorpha</taxon>
        <taxon>Muroidea</taxon>
        <taxon>Muridae</taxon>
        <taxon>Murinae</taxon>
        <taxon>Mus</taxon>
        <taxon>Mus</taxon>
    </lineage>
</organism>
<keyword id="KW-0025">Alternative splicing</keyword>
<keyword id="KW-0094">Blood coagulation</keyword>
<keyword id="KW-0903">Direct protein sequencing</keyword>
<keyword id="KW-1015">Disulfide bond</keyword>
<keyword id="KW-0325">Glycoprotein</keyword>
<keyword id="KW-0356">Hemostasis</keyword>
<keyword id="KW-0395">Inflammatory response</keyword>
<keyword id="KW-0597">Phosphoprotein</keyword>
<keyword id="KW-0646">Protease inhibitor</keyword>
<keyword id="KW-1185">Reference proteome</keyword>
<keyword id="KW-0677">Repeat</keyword>
<keyword id="KW-0964">Secreted</keyword>
<keyword id="KW-0732">Signal</keyword>
<keyword id="KW-0789">Thiol protease inhibitor</keyword>
<keyword id="KW-0838">Vasoactive</keyword>
<keyword id="KW-0840">Vasodilator</keyword>
<accession>O08677</accession>
<accession>O08676</accession>
<accession>Q32MX7</accession>
<accession>Q6S9I1</accession>
<accession>Q91XK5</accession>
<gene>
    <name type="primary">Kng1</name>
    <name type="synonym">Kng</name>
</gene>